<protein>
    <recommendedName>
        <fullName evidence="1">DNA-directed RNA polymerase subunit omega</fullName>
        <shortName evidence="1">RNAP omega subunit</shortName>
        <ecNumber evidence="1">2.7.7.6</ecNumber>
    </recommendedName>
    <alternativeName>
        <fullName evidence="1">RNA polymerase omega subunit</fullName>
    </alternativeName>
    <alternativeName>
        <fullName evidence="1">Transcriptase subunit omega</fullName>
    </alternativeName>
</protein>
<reference key="1">
    <citation type="journal article" date="2007" name="Genome Res.">
        <title>Genome characteristics of facultatively symbiotic Frankia sp. strains reflect host range and host plant biogeography.</title>
        <authorList>
            <person name="Normand P."/>
            <person name="Lapierre P."/>
            <person name="Tisa L.S."/>
            <person name="Gogarten J.P."/>
            <person name="Alloisio N."/>
            <person name="Bagnarol E."/>
            <person name="Bassi C.A."/>
            <person name="Berry A.M."/>
            <person name="Bickhart D.M."/>
            <person name="Choisne N."/>
            <person name="Couloux A."/>
            <person name="Cournoyer B."/>
            <person name="Cruveiller S."/>
            <person name="Daubin V."/>
            <person name="Demange N."/>
            <person name="Francino M.P."/>
            <person name="Goltsman E."/>
            <person name="Huang Y."/>
            <person name="Kopp O.R."/>
            <person name="Labarre L."/>
            <person name="Lapidus A."/>
            <person name="Lavire C."/>
            <person name="Marechal J."/>
            <person name="Martinez M."/>
            <person name="Mastronunzio J.E."/>
            <person name="Mullin B.C."/>
            <person name="Niemann J."/>
            <person name="Pujic P."/>
            <person name="Rawnsley T."/>
            <person name="Rouy Z."/>
            <person name="Schenowitz C."/>
            <person name="Sellstedt A."/>
            <person name="Tavares F."/>
            <person name="Tomkins J.P."/>
            <person name="Vallenet D."/>
            <person name="Valverde C."/>
            <person name="Wall L.G."/>
            <person name="Wang Y."/>
            <person name="Medigue C."/>
            <person name="Benson D.R."/>
        </authorList>
    </citation>
    <scope>NUCLEOTIDE SEQUENCE [LARGE SCALE GENOMIC DNA]</scope>
    <source>
        <strain>EAN1pec</strain>
    </source>
</reference>
<organism>
    <name type="scientific">Parafrankia sp. (strain EAN1pec)</name>
    <dbReference type="NCBI Taxonomy" id="298653"/>
    <lineage>
        <taxon>Bacteria</taxon>
        <taxon>Bacillati</taxon>
        <taxon>Actinomycetota</taxon>
        <taxon>Actinomycetes</taxon>
        <taxon>Frankiales</taxon>
        <taxon>Frankiaceae</taxon>
        <taxon>Parafrankia</taxon>
    </lineage>
</organism>
<dbReference type="EC" id="2.7.7.6" evidence="1"/>
<dbReference type="EMBL" id="CP000820">
    <property type="protein sequence ID" value="ABW11152.1"/>
    <property type="molecule type" value="Genomic_DNA"/>
</dbReference>
<dbReference type="RefSeq" id="WP_020459324.1">
    <property type="nucleotide sequence ID" value="NC_009921.1"/>
</dbReference>
<dbReference type="SMR" id="A8LE17"/>
<dbReference type="STRING" id="298653.Franean1_1714"/>
<dbReference type="KEGG" id="fre:Franean1_1714"/>
<dbReference type="eggNOG" id="COG1758">
    <property type="taxonomic scope" value="Bacteria"/>
</dbReference>
<dbReference type="HOGENOM" id="CLU_125406_1_1_11"/>
<dbReference type="GO" id="GO:0000428">
    <property type="term" value="C:DNA-directed RNA polymerase complex"/>
    <property type="evidence" value="ECO:0007669"/>
    <property type="project" value="UniProtKB-KW"/>
</dbReference>
<dbReference type="GO" id="GO:0003677">
    <property type="term" value="F:DNA binding"/>
    <property type="evidence" value="ECO:0007669"/>
    <property type="project" value="UniProtKB-UniRule"/>
</dbReference>
<dbReference type="GO" id="GO:0003899">
    <property type="term" value="F:DNA-directed RNA polymerase activity"/>
    <property type="evidence" value="ECO:0007669"/>
    <property type="project" value="UniProtKB-UniRule"/>
</dbReference>
<dbReference type="GO" id="GO:0006351">
    <property type="term" value="P:DNA-templated transcription"/>
    <property type="evidence" value="ECO:0007669"/>
    <property type="project" value="UniProtKB-UniRule"/>
</dbReference>
<dbReference type="Gene3D" id="3.90.940.10">
    <property type="match status" value="1"/>
</dbReference>
<dbReference type="HAMAP" id="MF_00366">
    <property type="entry name" value="RNApol_bact_RpoZ"/>
    <property type="match status" value="1"/>
</dbReference>
<dbReference type="InterPro" id="IPR003716">
    <property type="entry name" value="DNA-dir_RNA_pol_omega"/>
</dbReference>
<dbReference type="InterPro" id="IPR006110">
    <property type="entry name" value="Pol_omega/Rpo6/RPB6"/>
</dbReference>
<dbReference type="InterPro" id="IPR036161">
    <property type="entry name" value="RPB6/omega-like_sf"/>
</dbReference>
<dbReference type="NCBIfam" id="TIGR00690">
    <property type="entry name" value="rpoZ"/>
    <property type="match status" value="1"/>
</dbReference>
<dbReference type="PANTHER" id="PTHR34476">
    <property type="entry name" value="DNA-DIRECTED RNA POLYMERASE SUBUNIT OMEGA"/>
    <property type="match status" value="1"/>
</dbReference>
<dbReference type="PANTHER" id="PTHR34476:SF1">
    <property type="entry name" value="DNA-DIRECTED RNA POLYMERASE SUBUNIT OMEGA"/>
    <property type="match status" value="1"/>
</dbReference>
<dbReference type="Pfam" id="PF01192">
    <property type="entry name" value="RNA_pol_Rpb6"/>
    <property type="match status" value="1"/>
</dbReference>
<dbReference type="SMART" id="SM01409">
    <property type="entry name" value="RNA_pol_Rpb6"/>
    <property type="match status" value="1"/>
</dbReference>
<dbReference type="SUPFAM" id="SSF63562">
    <property type="entry name" value="RPB6/omega subunit-like"/>
    <property type="match status" value="1"/>
</dbReference>
<accession>A8LE17</accession>
<sequence length="94" mass="10171">MSGTVAQPEGITNPPIDELLEATDSKYSLVIYAAKRARQINAYYSQLGEGLLEYVGPLVETTSAQEKPLSIALREINSGLLTHETITDPLPPIS</sequence>
<feature type="chain" id="PRO_1000121227" description="DNA-directed RNA polymerase subunit omega">
    <location>
        <begin position="1"/>
        <end position="94"/>
    </location>
</feature>
<gene>
    <name evidence="1" type="primary">rpoZ</name>
    <name type="ordered locus">Franean1_1714</name>
</gene>
<comment type="function">
    <text evidence="1">Promotes RNA polymerase assembly. Latches the N- and C-terminal regions of the beta' subunit thereby facilitating its interaction with the beta and alpha subunits.</text>
</comment>
<comment type="catalytic activity">
    <reaction evidence="1">
        <text>RNA(n) + a ribonucleoside 5'-triphosphate = RNA(n+1) + diphosphate</text>
        <dbReference type="Rhea" id="RHEA:21248"/>
        <dbReference type="Rhea" id="RHEA-COMP:14527"/>
        <dbReference type="Rhea" id="RHEA-COMP:17342"/>
        <dbReference type="ChEBI" id="CHEBI:33019"/>
        <dbReference type="ChEBI" id="CHEBI:61557"/>
        <dbReference type="ChEBI" id="CHEBI:140395"/>
        <dbReference type="EC" id="2.7.7.6"/>
    </reaction>
</comment>
<comment type="subunit">
    <text evidence="1">The RNAP catalytic core consists of 2 alpha, 1 beta, 1 beta' and 1 omega subunit. When a sigma factor is associated with the core the holoenzyme is formed, which can initiate transcription.</text>
</comment>
<comment type="similarity">
    <text evidence="1">Belongs to the RNA polymerase subunit omega family.</text>
</comment>
<name>RPOZ_PARS2</name>
<proteinExistence type="inferred from homology"/>
<keyword id="KW-0240">DNA-directed RNA polymerase</keyword>
<keyword id="KW-0548">Nucleotidyltransferase</keyword>
<keyword id="KW-0804">Transcription</keyword>
<keyword id="KW-0808">Transferase</keyword>
<evidence type="ECO:0000255" key="1">
    <source>
        <dbReference type="HAMAP-Rule" id="MF_00366"/>
    </source>
</evidence>